<evidence type="ECO:0000255" key="1">
    <source>
        <dbReference type="HAMAP-Rule" id="MF_00063"/>
    </source>
</evidence>
<proteinExistence type="inferred from homology"/>
<feature type="chain" id="PRO_1000008949" description="Phosphoadenosine 5'-phosphosulfate reductase">
    <location>
        <begin position="1"/>
        <end position="244"/>
    </location>
</feature>
<feature type="active site" description="Nucleophile; cysteine thiosulfonate intermediate" evidence="1">
    <location>
        <position position="239"/>
    </location>
</feature>
<sequence>MSAFHLETLKSLPKAEQEAALSEANRQLEEMSAEDRLKWAFDNLSGQFVLSSSFGIQAAVMLHLVTRKKADIPVILTDTGYLFPETYRFIDALTEKLDLNLQVFRAALSPAWQEARYGKLWEQGVEGIERYNDINKVEPMNRALKTLEAGTWFAGLRRDQSKSRSHLPILAIQRGVFKFLPIIDWDNRKIHYYLKEHDLPYHPLWDEGYLSVGDTHTTRKWEEGMSEEETRFFGLKRECGLHEG</sequence>
<keyword id="KW-0963">Cytoplasm</keyword>
<keyword id="KW-0560">Oxidoreductase</keyword>
<keyword id="KW-1185">Reference proteome</keyword>
<gene>
    <name evidence="1" type="primary">cysH</name>
    <name type="ordered locus">ZMO0007</name>
</gene>
<name>CYSH_ZYMMO</name>
<dbReference type="EC" id="1.8.4.8" evidence="1"/>
<dbReference type="EMBL" id="AE008692">
    <property type="protein sequence ID" value="AAV88631.1"/>
    <property type="molecule type" value="Genomic_DNA"/>
</dbReference>
<dbReference type="RefSeq" id="WP_011239995.1">
    <property type="nucleotide sequence ID" value="NZ_CP035711.1"/>
</dbReference>
<dbReference type="SMR" id="Q5NRM3"/>
<dbReference type="STRING" id="264203.ZMO0007"/>
<dbReference type="KEGG" id="zmo:ZMO0007"/>
<dbReference type="eggNOG" id="COG0175">
    <property type="taxonomic scope" value="Bacteria"/>
</dbReference>
<dbReference type="HOGENOM" id="CLU_044089_3_0_5"/>
<dbReference type="UniPathway" id="UPA00140">
    <property type="reaction ID" value="UER00206"/>
</dbReference>
<dbReference type="Proteomes" id="UP000001173">
    <property type="component" value="Chromosome"/>
</dbReference>
<dbReference type="GO" id="GO:0005737">
    <property type="term" value="C:cytoplasm"/>
    <property type="evidence" value="ECO:0007669"/>
    <property type="project" value="UniProtKB-SubCell"/>
</dbReference>
<dbReference type="GO" id="GO:0004604">
    <property type="term" value="F:phosphoadenylyl-sulfate reductase (thioredoxin) activity"/>
    <property type="evidence" value="ECO:0007669"/>
    <property type="project" value="UniProtKB-UniRule"/>
</dbReference>
<dbReference type="GO" id="GO:0070814">
    <property type="term" value="P:hydrogen sulfide biosynthetic process"/>
    <property type="evidence" value="ECO:0007669"/>
    <property type="project" value="UniProtKB-UniRule"/>
</dbReference>
<dbReference type="GO" id="GO:0019379">
    <property type="term" value="P:sulfate assimilation, phosphoadenylyl sulfate reduction by phosphoadenylyl-sulfate reductase (thioredoxin)"/>
    <property type="evidence" value="ECO:0007669"/>
    <property type="project" value="UniProtKB-UniRule"/>
</dbReference>
<dbReference type="CDD" id="cd23945">
    <property type="entry name" value="PAPS_reductase"/>
    <property type="match status" value="1"/>
</dbReference>
<dbReference type="FunFam" id="3.40.50.620:FF:000043">
    <property type="entry name" value="Phosphoadenosine phosphosulfate reductase"/>
    <property type="match status" value="1"/>
</dbReference>
<dbReference type="Gene3D" id="3.40.50.620">
    <property type="entry name" value="HUPs"/>
    <property type="match status" value="1"/>
</dbReference>
<dbReference type="HAMAP" id="MF_00063">
    <property type="entry name" value="CysH"/>
    <property type="match status" value="1"/>
</dbReference>
<dbReference type="InterPro" id="IPR004511">
    <property type="entry name" value="PAPS/APS_Rdtase"/>
</dbReference>
<dbReference type="InterPro" id="IPR002500">
    <property type="entry name" value="PAPS_reduct_dom"/>
</dbReference>
<dbReference type="InterPro" id="IPR011800">
    <property type="entry name" value="PAPS_reductase_CysH"/>
</dbReference>
<dbReference type="InterPro" id="IPR014729">
    <property type="entry name" value="Rossmann-like_a/b/a_fold"/>
</dbReference>
<dbReference type="NCBIfam" id="TIGR00434">
    <property type="entry name" value="cysH"/>
    <property type="match status" value="1"/>
</dbReference>
<dbReference type="NCBIfam" id="TIGR02057">
    <property type="entry name" value="PAPS_reductase"/>
    <property type="match status" value="1"/>
</dbReference>
<dbReference type="NCBIfam" id="NF002537">
    <property type="entry name" value="PRK02090.1"/>
    <property type="match status" value="1"/>
</dbReference>
<dbReference type="PANTHER" id="PTHR46509">
    <property type="entry name" value="PHOSPHOADENOSINE PHOSPHOSULFATE REDUCTASE"/>
    <property type="match status" value="1"/>
</dbReference>
<dbReference type="PANTHER" id="PTHR46509:SF1">
    <property type="entry name" value="PHOSPHOADENOSINE PHOSPHOSULFATE REDUCTASE"/>
    <property type="match status" value="1"/>
</dbReference>
<dbReference type="Pfam" id="PF01507">
    <property type="entry name" value="PAPS_reduct"/>
    <property type="match status" value="1"/>
</dbReference>
<dbReference type="PIRSF" id="PIRSF000857">
    <property type="entry name" value="PAPS_reductase"/>
    <property type="match status" value="1"/>
</dbReference>
<dbReference type="SUPFAM" id="SSF52402">
    <property type="entry name" value="Adenine nucleotide alpha hydrolases-like"/>
    <property type="match status" value="1"/>
</dbReference>
<accession>Q5NRM3</accession>
<reference key="1">
    <citation type="journal article" date="2005" name="Nat. Biotechnol.">
        <title>The genome sequence of the ethanologenic bacterium Zymomonas mobilis ZM4.</title>
        <authorList>
            <person name="Seo J.-S."/>
            <person name="Chong H."/>
            <person name="Park H.S."/>
            <person name="Yoon K.-O."/>
            <person name="Jung C."/>
            <person name="Kim J.J."/>
            <person name="Hong J.H."/>
            <person name="Kim H."/>
            <person name="Kim J.-H."/>
            <person name="Kil J.-I."/>
            <person name="Park C.J."/>
            <person name="Oh H.-M."/>
            <person name="Lee J.-S."/>
            <person name="Jin S.-J."/>
            <person name="Um H.-W."/>
            <person name="Lee H.-J."/>
            <person name="Oh S.-J."/>
            <person name="Kim J.Y."/>
            <person name="Kang H.L."/>
            <person name="Lee S.Y."/>
            <person name="Lee K.J."/>
            <person name="Kang H.S."/>
        </authorList>
    </citation>
    <scope>NUCLEOTIDE SEQUENCE [LARGE SCALE GENOMIC DNA]</scope>
    <source>
        <strain>ATCC 31821 / ZM4 / CP4</strain>
    </source>
</reference>
<comment type="function">
    <text evidence="1">Catalyzes the formation of sulfite from phosphoadenosine 5'-phosphosulfate (PAPS) using thioredoxin as an electron donor.</text>
</comment>
<comment type="catalytic activity">
    <reaction evidence="1">
        <text>[thioredoxin]-disulfide + sulfite + adenosine 3',5'-bisphosphate + 2 H(+) = [thioredoxin]-dithiol + 3'-phosphoadenylyl sulfate</text>
        <dbReference type="Rhea" id="RHEA:11724"/>
        <dbReference type="Rhea" id="RHEA-COMP:10698"/>
        <dbReference type="Rhea" id="RHEA-COMP:10700"/>
        <dbReference type="ChEBI" id="CHEBI:15378"/>
        <dbReference type="ChEBI" id="CHEBI:17359"/>
        <dbReference type="ChEBI" id="CHEBI:29950"/>
        <dbReference type="ChEBI" id="CHEBI:50058"/>
        <dbReference type="ChEBI" id="CHEBI:58339"/>
        <dbReference type="ChEBI" id="CHEBI:58343"/>
        <dbReference type="EC" id="1.8.4.8"/>
    </reaction>
</comment>
<comment type="pathway">
    <text evidence="1">Sulfur metabolism; hydrogen sulfide biosynthesis; sulfite from sulfate: step 3/3.</text>
</comment>
<comment type="subcellular location">
    <subcellularLocation>
        <location evidence="1">Cytoplasm</location>
    </subcellularLocation>
</comment>
<comment type="similarity">
    <text evidence="1">Belongs to the PAPS reductase family. CysH subfamily.</text>
</comment>
<protein>
    <recommendedName>
        <fullName evidence="1">Phosphoadenosine 5'-phosphosulfate reductase</fullName>
        <shortName evidence="1">PAPS reductase</shortName>
        <ecNumber evidence="1">1.8.4.8</ecNumber>
    </recommendedName>
    <alternativeName>
        <fullName evidence="1">3'-phosphoadenylylsulfate reductase</fullName>
    </alternativeName>
    <alternativeName>
        <fullName evidence="1">PAPS reductase, thioredoxin dependent</fullName>
    </alternativeName>
    <alternativeName>
        <fullName evidence="1">PAPS sulfotransferase</fullName>
    </alternativeName>
    <alternativeName>
        <fullName evidence="1">PAdoPS reductase</fullName>
    </alternativeName>
</protein>
<organism>
    <name type="scientific">Zymomonas mobilis subsp. mobilis (strain ATCC 31821 / ZM4 / CP4)</name>
    <dbReference type="NCBI Taxonomy" id="264203"/>
    <lineage>
        <taxon>Bacteria</taxon>
        <taxon>Pseudomonadati</taxon>
        <taxon>Pseudomonadota</taxon>
        <taxon>Alphaproteobacteria</taxon>
        <taxon>Sphingomonadales</taxon>
        <taxon>Zymomonadaceae</taxon>
        <taxon>Zymomonas</taxon>
    </lineage>
</organism>